<reference key="1">
    <citation type="journal article" date="2012" name="Emerg. Infect. Dis.">
        <title>Novel orthobunyavirus in cattle, europe, 2011.</title>
        <authorList>
            <person name="Hoffmann B."/>
            <person name="Scheuch M."/>
            <person name="Hoper D."/>
            <person name="Jungblut R."/>
            <person name="Holsteg M."/>
            <person name="Schirrmeier H."/>
            <person name="Eschbaumer M."/>
            <person name="Goller K.V."/>
            <person name="Wernike K."/>
            <person name="Fischer M."/>
            <person name="Breithaupt A."/>
            <person name="Mettenleiter T.C."/>
            <person name="Beer M."/>
        </authorList>
    </citation>
    <scope>NUCLEOTIDE SEQUENCE [GENOMIC RNA]</scope>
</reference>
<reference key="2">
    <citation type="submission" date="2012-01" db="EMBL/GenBank/DDBJ databases">
        <authorList>
            <person name="Hoeper D."/>
        </authorList>
    </citation>
    <scope>NUCLEOTIDE SEQUENCE [GENOMIC RNA]</scope>
</reference>
<reference key="3">
    <citation type="journal article" date="2013" name="PLoS Pathog.">
        <title>Schmallenberg virus pathogenesis, tropism and interaction with the innate immune system of the host.</title>
        <authorList>
            <person name="Varela M."/>
            <person name="Schnettler E."/>
            <person name="Caporale M."/>
            <person name="Murgia C."/>
            <person name="Barry G."/>
            <person name="McFarlane M."/>
            <person name="McGregor E."/>
            <person name="Piras I.M."/>
            <person name="Shaw A."/>
            <person name="Lamm C."/>
            <person name="Janowicz A."/>
            <person name="Beer M."/>
            <person name="Glass M."/>
            <person name="Herder V."/>
            <person name="Hahn K."/>
            <person name="Baumgartner W."/>
            <person name="Kohl A."/>
            <person name="Palmarini M."/>
        </authorList>
    </citation>
    <scope>NUCLEOTIDE SEQUENCE [GENOMIC RNA]</scope>
    <source>
        <strain>Germany</strain>
    </source>
</reference>
<reference key="4">
    <citation type="journal article" date="2017" name="J. Gen. Virol.">
        <title>The amino terminal subdomain of glycoprotein Gc of Schmallenberg virus: disulfide bonding and structural determinants of neutralization.</title>
        <authorList>
            <person name="Roman-Sosa G."/>
            <person name="Karger A."/>
            <person name="Kraatz F."/>
            <person name="Aebischer A."/>
            <person name="Wernike K."/>
            <person name="Maksimov P."/>
            <person name="Lillig C.H."/>
            <person name="Reimann I."/>
            <person name="Brocchi E."/>
            <person name="Keller M."/>
            <person name="Beer M."/>
        </authorList>
    </citation>
    <scope>DISULFIDE BOND</scope>
    <scope>MUTAGENESIS OF CYS-580 AND CYS-589</scope>
    <scope>GLYCOSYLATION AT ASN-40; ASN-493; ASN-686 AND ASN-1353</scope>
</reference>
<reference evidence="9 10 11" key="5">
    <citation type="journal article" date="2019" name="Nat. Commun.">
        <title>Orthobunyavirus spike architecture and recognition by neutralizing antibodies.</title>
        <authorList>
            <person name="Hellert J."/>
            <person name="Aebischer A."/>
            <person name="Wernike K."/>
            <person name="Haouz A."/>
            <person name="Brocchi E."/>
            <person name="Reiche S."/>
            <person name="Guardado-Calvo P."/>
            <person name="Beer M."/>
            <person name="Rey F.A."/>
        </authorList>
    </citation>
    <scope>X-RAY CRYSTALLOGRAPHY (2.02 ANGSTROMS) OF 465-874</scope>
    <scope>FUNCTION (GLYCOPROTEIN C)</scope>
    <scope>SUBUNIT (GLYCOPROTEIN C)</scope>
</reference>
<protein>
    <recommendedName>
        <fullName>Envelopment polyprotein</fullName>
    </recommendedName>
    <alternativeName>
        <fullName>M polyprotein</fullName>
    </alternativeName>
    <component>
        <recommendedName>
            <fullName evidence="2">Glycoprotein N</fullName>
            <shortName>Gn</shortName>
        </recommendedName>
        <alternativeName>
            <fullName>Glycoprotein G2</fullName>
        </alternativeName>
    </component>
    <component>
        <recommendedName>
            <fullName evidence="2">Non-structural protein M</fullName>
            <shortName>NSm</shortName>
        </recommendedName>
    </component>
    <component>
        <recommendedName>
            <fullName evidence="2">Glycoprotein C</fullName>
            <shortName>Gc</shortName>
        </recommendedName>
        <alternativeName>
            <fullName>Glycoprotein G1</fullName>
        </alternativeName>
    </component>
</protein>
<sequence length="1403" mass="158806">MLLNIVLISNLACLAFALPLKEGTRGSRCFLNGELVKTVNTSKVVSECCVKDDISIIKSNAEHYKSGDRLAAVIKYYRLYQVKDWHSCNPIYDDHGSFMILDIDNTGTLIPKMHTCRVECEIALNKDTGEVILNSYRINHYRISGTMHVSGWFKNKIEIPLENTCESIEVTCGLKTLNFHACFHTHKSCTRYFKGSILPELMIESFCTNLELILLVTFILVGSVMMMILTKTYIVYVFIPIFYPFVKLYAYMYNKYFKLCKNCLLAVHPFTNCPSTCICGMIYTTTESLKLHRMCNNCSGYKALPKTRKLCKSKISNIVLCVITSLIFFSFITPISSQCIDIEKLPDEYITCKRELANIKSLTIDDTYSFIYSCTCIIVLILLKKAAKYILYCNCSFCGMVHERRGLKIMDNFTNKCLSCVCAENKGLTIHRASEKCLFKFESSYNRTGLIIFMLLLVPTIVMTQETSINCKNIQSTQLTIEHLSKCMAFYQNKTSSPVVINEIISDASVDEQELIKSLNLNCNVIDRFISESSVIETQVYYEYIKSQLCPLQVHDIFTINSASNIQWKALARSFTLGVCNTNPHKHICRCLESMQMCTSTKTDHAREMSIYYDGHPDRFEHDMKIILNIMRYIVPGLGRVLLDQIKQTKDYQALRHIQGKLSPKSQSNLQLKGFLEFVDFILGANVTIEKTPQTLTTLSLIKGAHRNLDQKDPGPTPILVCKSPQKVVCYSPRGVTHPGDYISCKSKMYKWPSLGVYKHNRDQQQACSSDTHCLEMFEPAERTITTKICKVSDMTYSESPYSTGIPSCNVKRFGSCNVRGHQWQIAECSNGLFYYVSAKAHSKTNDITLYCLSANCLDLRYAFRSSSCSDIVWDTSYRNKLTPKSINHPDIENYIAALQSDIANDLTMHYFKPLKNLPAIIPQYKTMTLNGDKVSNGIRNSYIESHIPAINGLSAGINIAMPNGESLFSIIIYVRRVINKASYRFLYETGPTIGINAKHEEVCTGKCPSPIPHQDGWVTFSKERSSNWGCEEWGCLAINDGCLYGSCQDIIRPEYKIYKKSSIEQKDVEVCITMAHESFCSTVDVLQPLISDRIQLDIQTIQMDSMPNIIAVKNGKVYVGDINDLGSTAKKCGSVQLYSEGIIGSGTPKFDYVCHAFNRKDVILRRCFDNSYQSCLLLEQDNTLTIASTSHMEVHKKVSSVGTINYKIMLGDFDYNAYSTQATVTIDEIRCGGCYGCPEGMACALKLSTNTIGSCSIKSNCDTYIKIIAVDPMQSEYSIKLNCPLATETVSVSVCSASAYTKPSISKNQPKIVLNSLDETSYIEQHDKKCSTWLCRVYKEGISVIFQPLFGNLSFYWRLTIYIIISLIMLILFLYILIPLCKRLKGLLEYNERIYQMENKFK</sequence>
<organismHost>
    <name type="scientific">Bos taurus</name>
    <name type="common">Bovine</name>
    <dbReference type="NCBI Taxonomy" id="9913"/>
</organismHost>
<organismHost>
    <name type="scientific">Ovis aries</name>
    <name type="common">Sheep</name>
    <dbReference type="NCBI Taxonomy" id="9940"/>
</organismHost>
<organism>
    <name type="scientific">Bovine Schmallenberg virus (isolate Bovine/BH80/Germany/2011)</name>
    <name type="common">SBV</name>
    <dbReference type="NCBI Taxonomy" id="1318464"/>
    <lineage>
        <taxon>Viruses</taxon>
        <taxon>Riboviria</taxon>
        <taxon>Orthornavirae</taxon>
        <taxon>Negarnaviricota</taxon>
        <taxon>Polyploviricotina</taxon>
        <taxon>Ellioviricetes</taxon>
        <taxon>Bunyavirales</taxon>
        <taxon>Peribunyaviridae</taxon>
        <taxon>Orthobunyavirus</taxon>
        <taxon>Orthobunyavirus schmallenbergense</taxon>
    </lineage>
</organism>
<gene>
    <name type="primary">GP</name>
</gene>
<dbReference type="EMBL" id="JX853180">
    <property type="protein sequence ID" value="AGC84161.1"/>
    <property type="molecule type" value="Viral_cRNA"/>
</dbReference>
<dbReference type="EMBL" id="HE649913">
    <property type="protein sequence ID" value="CCF55030.1"/>
    <property type="molecule type" value="Genomic_RNA"/>
</dbReference>
<dbReference type="PDB" id="6H3S">
    <property type="method" value="X-ray"/>
    <property type="resolution" value="2.02 A"/>
    <property type="chains" value="A/B=465-874"/>
</dbReference>
<dbReference type="PDB" id="6H3T">
    <property type="method" value="X-ray"/>
    <property type="resolution" value="2.84 A"/>
    <property type="chains" value="A/B=465-702"/>
</dbReference>
<dbReference type="PDB" id="6H3U">
    <property type="method" value="X-ray"/>
    <property type="resolution" value="3.17 A"/>
    <property type="chains" value="A/B=465-702"/>
</dbReference>
<dbReference type="PDB" id="7A56">
    <property type="method" value="X-ray"/>
    <property type="resolution" value="1.85 A"/>
    <property type="chains" value="A=881-1306"/>
</dbReference>
<dbReference type="PDBsum" id="6H3S"/>
<dbReference type="PDBsum" id="6H3T"/>
<dbReference type="PDBsum" id="6H3U"/>
<dbReference type="PDBsum" id="7A56"/>
<dbReference type="SMR" id="H2AM12"/>
<dbReference type="iPTMnet" id="H2AM12"/>
<dbReference type="GO" id="GO:0044167">
    <property type="term" value="C:host cell endoplasmic reticulum membrane"/>
    <property type="evidence" value="ECO:0007669"/>
    <property type="project" value="UniProtKB-SubCell"/>
</dbReference>
<dbReference type="GO" id="GO:0044178">
    <property type="term" value="C:host cell Golgi membrane"/>
    <property type="evidence" value="ECO:0007669"/>
    <property type="project" value="UniProtKB-SubCell"/>
</dbReference>
<dbReference type="GO" id="GO:0016020">
    <property type="term" value="C:membrane"/>
    <property type="evidence" value="ECO:0007669"/>
    <property type="project" value="UniProtKB-KW"/>
</dbReference>
<dbReference type="GO" id="GO:0055036">
    <property type="term" value="C:virion membrane"/>
    <property type="evidence" value="ECO:0007669"/>
    <property type="project" value="UniProtKB-SubCell"/>
</dbReference>
<dbReference type="GO" id="GO:0039654">
    <property type="term" value="P:fusion of virus membrane with host endosome membrane"/>
    <property type="evidence" value="ECO:0007669"/>
    <property type="project" value="UniProtKB-KW"/>
</dbReference>
<dbReference type="GO" id="GO:0046718">
    <property type="term" value="P:symbiont entry into host cell"/>
    <property type="evidence" value="ECO:0007669"/>
    <property type="project" value="UniProtKB-KW"/>
</dbReference>
<dbReference type="GO" id="GO:0044003">
    <property type="term" value="P:symbiont-mediated perturbation of host process"/>
    <property type="evidence" value="ECO:0007669"/>
    <property type="project" value="InterPro"/>
</dbReference>
<dbReference type="GO" id="GO:0019062">
    <property type="term" value="P:virion attachment to host cell"/>
    <property type="evidence" value="ECO:0007669"/>
    <property type="project" value="UniProtKB-KW"/>
</dbReference>
<dbReference type="InterPro" id="IPR005167">
    <property type="entry name" value="Bunya_G1"/>
</dbReference>
<dbReference type="InterPro" id="IPR005168">
    <property type="entry name" value="Bunya_G2"/>
</dbReference>
<dbReference type="InterPro" id="IPR026400">
    <property type="entry name" value="Bunya_nonstruc_pro_NSm"/>
</dbReference>
<dbReference type="NCBIfam" id="TIGR04210">
    <property type="entry name" value="bunya_NSm"/>
    <property type="match status" value="1"/>
</dbReference>
<dbReference type="Pfam" id="PF03557">
    <property type="entry name" value="Bunya_G1"/>
    <property type="match status" value="1"/>
</dbReference>
<dbReference type="Pfam" id="PF03563">
    <property type="entry name" value="Bunya_G2"/>
    <property type="match status" value="1"/>
</dbReference>
<keyword id="KW-0002">3D-structure</keyword>
<keyword id="KW-1015">Disulfide bond</keyword>
<keyword id="KW-1170">Fusion of virus membrane with host endosomal membrane</keyword>
<keyword id="KW-1168">Fusion of virus membrane with host membrane</keyword>
<keyword id="KW-0325">Glycoprotein</keyword>
<keyword id="KW-1038">Host endoplasmic reticulum</keyword>
<keyword id="KW-1040">Host Golgi apparatus</keyword>
<keyword id="KW-1043">Host membrane</keyword>
<keyword id="KW-0945">Host-virus interaction</keyword>
<keyword id="KW-0472">Membrane</keyword>
<keyword id="KW-0732">Signal</keyword>
<keyword id="KW-0812">Transmembrane</keyword>
<keyword id="KW-1133">Transmembrane helix</keyword>
<keyword id="KW-1161">Viral attachment to host cell</keyword>
<keyword id="KW-1162">Viral penetration into host cytoplasm</keyword>
<keyword id="KW-0946">Virion</keyword>
<keyword id="KW-1160">Virus entry into host cell</keyword>
<evidence type="ECO:0000250" key="1">
    <source>
        <dbReference type="UniProtKB" id="A6XIP3"/>
    </source>
</evidence>
<evidence type="ECO:0000250" key="2">
    <source>
        <dbReference type="UniProtKB" id="P04505"/>
    </source>
</evidence>
<evidence type="ECO:0000250" key="3">
    <source>
        <dbReference type="UniProtKB" id="Q8JSZ3"/>
    </source>
</evidence>
<evidence type="ECO:0000255" key="4"/>
<evidence type="ECO:0000269" key="5">
    <source>
    </source>
</evidence>
<evidence type="ECO:0000269" key="6">
    <source>
    </source>
</evidence>
<evidence type="ECO:0000305" key="7"/>
<evidence type="ECO:0000305" key="8">
    <source>
    </source>
</evidence>
<evidence type="ECO:0007744" key="9">
    <source>
        <dbReference type="PDB" id="6H3S"/>
    </source>
</evidence>
<evidence type="ECO:0007744" key="10">
    <source>
        <dbReference type="PDB" id="6H3T"/>
    </source>
</evidence>
<evidence type="ECO:0007744" key="11">
    <source>
        <dbReference type="PDB" id="6H3U"/>
    </source>
</evidence>
<evidence type="ECO:0007829" key="12">
    <source>
        <dbReference type="PDB" id="6H3S"/>
    </source>
</evidence>
<evidence type="ECO:0007829" key="13">
    <source>
        <dbReference type="PDB" id="6H3T"/>
    </source>
</evidence>
<evidence type="ECO:0007829" key="14">
    <source>
        <dbReference type="PDB" id="6H3U"/>
    </source>
</evidence>
<evidence type="ECO:0007829" key="15">
    <source>
        <dbReference type="PDB" id="7A56"/>
    </source>
</evidence>
<name>GP_SBVBH</name>
<accession>H2AM12</accession>
<proteinExistence type="evidence at protein level"/>
<comment type="function">
    <molecule>Glycoprotein N</molecule>
    <text evidence="3">Glycoprotein C and glycoprotein N interact with each other and are present at the surface of the virion (By similarity). Glycoprotein N probably locks the Gn-Gc complex in a prefusion state (By similarity). Glycoprotein N and glycoprotein C are able to attach the virion to host cell receptors (By similarity). This attachment induces virion internalization predominantly through clathrin-dependent endocytosis (By similarity).</text>
</comment>
<comment type="function">
    <molecule>Glycoprotein C</molecule>
    <text evidence="1 3 6">Glycoprotein C and glycoprotein N interact with each other and are present at the surface of the virion (By similarity). The spikes at the surface of the virion are formed by an N-terminal extension of glycoprotein C (PubMed:30787296). Glycoprotein N and glycoprotein C are able to attach the virion to host cell receptors (By similarity). This attachment induces virion internalization predominantly through clathrin-dependent endocytosis (By similarity). Class II fusion protein that promotes fusion of viral membrane with host endosomal membrane after endocytosis of the virion (By similarity). Exposure to potassium is necessary for the conformational change leading to fusion (By similarity).</text>
</comment>
<comment type="subunit">
    <molecule>Glycoprotein N</molecule>
    <text evidence="3">Heterodimer with glycoprotein C; in prefusion state.</text>
</comment>
<comment type="subunit">
    <molecule>Glycoprotein C</molecule>
    <text evidence="3 8">Heterodimer with glycoprotein N; in prefusion state (By similarity). Homotrimeric; in postfusion state (Probable).</text>
</comment>
<comment type="subcellular location">
    <molecule>Envelopment polyprotein</molecule>
    <subcellularLocation>
        <location evidence="3">Host endoplasmic reticulum membrane</location>
    </subcellularLocation>
</comment>
<comment type="subcellular location">
    <molecule>Glycoprotein N</molecule>
    <subcellularLocation>
        <location evidence="3">Virion membrane</location>
        <topology evidence="3">Multi-pass membrane protein</topology>
    </subcellularLocation>
    <subcellularLocation>
        <location evidence="3">Host Golgi apparatus membrane</location>
        <topology evidence="3">Multi-pass membrane protein</topology>
    </subcellularLocation>
</comment>
<comment type="subcellular location">
    <molecule>Glycoprotein C</molecule>
    <subcellularLocation>
        <location evidence="3">Host Golgi apparatus membrane</location>
        <topology evidence="4">Multi-pass membrane protein</topology>
    </subcellularLocation>
</comment>
<comment type="PTM">
    <molecule>Envelopment polyprotein</molecule>
    <text evidence="3">Specific enzymatic cleavage by host MBTPS1/S1P/SKI-1 endopeptidase yield glycoprotein N. Specific enzymatic cleavages by host furin-like protease and MBTPS1/S1P endopeptidase yield GP38.</text>
</comment>
<comment type="PTM">
    <molecule>Glycoprotein N</molecule>
    <text evidence="3">Glycosylated.</text>
</comment>
<comment type="PTM">
    <molecule>Glycoprotein C</molecule>
    <text evidence="3">Glycosylated.</text>
</comment>
<comment type="similarity">
    <text evidence="7">Belongs to the nairovirus envelope glycoprotein family.</text>
</comment>
<feature type="signal peptide" evidence="4">
    <location>
        <begin position="1"/>
        <end position="17"/>
    </location>
</feature>
<feature type="chain" id="PRO_0000422470" description="Envelopment polyprotein">
    <location>
        <begin position="18"/>
        <end position="1403"/>
    </location>
</feature>
<feature type="chain" id="PRO_0000422471" description="Glycoprotein N">
    <location>
        <begin position="18"/>
        <end position="308"/>
    </location>
</feature>
<feature type="chain" id="PRO_0000422472" description="Non-structural protein M">
    <location>
        <begin position="309"/>
        <end position="466"/>
    </location>
</feature>
<feature type="chain" id="PRO_0000422473" description="Glycoprotein C">
    <location>
        <begin position="467"/>
        <end position="1403"/>
    </location>
</feature>
<feature type="topological domain" description="Lumenal" evidence="7">
    <location>
        <begin position="18"/>
        <end position="209"/>
    </location>
</feature>
<feature type="transmembrane region" description="Helical" evidence="4">
    <location>
        <begin position="210"/>
        <end position="230"/>
    </location>
</feature>
<feature type="topological domain" description="Cytoplasmic" evidence="3">
    <location>
        <begin position="231"/>
        <end position="314"/>
    </location>
</feature>
<feature type="transmembrane region" description="Helical" evidence="4">
    <location>
        <begin position="315"/>
        <end position="335"/>
    </location>
</feature>
<feature type="topological domain" description="Lumenal" evidence="3">
    <location>
        <begin position="336"/>
        <end position="361"/>
    </location>
</feature>
<feature type="transmembrane region" description="Helical" evidence="4">
    <location>
        <begin position="362"/>
        <end position="382"/>
    </location>
</feature>
<feature type="topological domain" description="Cytoplasmic" evidence="3">
    <location>
        <begin position="383"/>
        <end position="448"/>
    </location>
</feature>
<feature type="transmembrane region" description="Helical" evidence="4">
    <location>
        <begin position="449"/>
        <end position="469"/>
    </location>
</feature>
<feature type="topological domain" description="Lumenal" evidence="7">
    <location>
        <begin position="470"/>
        <end position="1361"/>
    </location>
</feature>
<feature type="transmembrane region" description="Helical" evidence="4">
    <location>
        <begin position="1362"/>
        <end position="1382"/>
    </location>
</feature>
<feature type="topological domain" description="Cytoplasmic" evidence="7">
    <location>
        <begin position="1383"/>
        <end position="1403"/>
    </location>
</feature>
<feature type="glycosylation site" description="N-linked (GlcNAc...) asparagine; by host" evidence="4">
    <location>
        <position position="40"/>
    </location>
</feature>
<feature type="glycosylation site" description="N-linked (GlcNAc...) asparagine; by host" evidence="5">
    <location>
        <position position="493"/>
    </location>
</feature>
<feature type="glycosylation site" description="N-linked (GlcNAc...) asparagine; by host" evidence="5">
    <location>
        <position position="686"/>
    </location>
</feature>
<feature type="glycosylation site" description="N-linked (GlcNAc...) asparagine; by host" evidence="4">
    <location>
        <position position="1353"/>
    </location>
</feature>
<feature type="disulfide bond" evidence="5">
    <location>
        <begin position="471"/>
        <end position="487"/>
    </location>
</feature>
<feature type="disulfide bond" evidence="5">
    <location>
        <begin position="523"/>
        <end position="550"/>
    </location>
</feature>
<feature type="disulfide bond" evidence="5">
    <location>
        <begin position="580"/>
        <end position="589"/>
    </location>
</feature>
<feature type="disulfide bond" evidence="5">
    <location>
        <begin position="591"/>
        <end position="598"/>
    </location>
</feature>
<feature type="mutagenesis site" description="Loss of disulfide bond; when associated with S-589." evidence="5">
    <original>C</original>
    <variation>S</variation>
    <location>
        <position position="580"/>
    </location>
</feature>
<feature type="mutagenesis site" description="Loss of disulfide bond; when associated with S-580." evidence="5">
    <original>C</original>
    <variation>S</variation>
    <location>
        <position position="589"/>
    </location>
</feature>
<feature type="strand" evidence="13">
    <location>
        <begin position="471"/>
        <end position="473"/>
    </location>
</feature>
<feature type="helix" evidence="13">
    <location>
        <begin position="476"/>
        <end position="478"/>
    </location>
</feature>
<feature type="helix" evidence="12">
    <location>
        <begin position="481"/>
        <end position="484"/>
    </location>
</feature>
<feature type="helix" evidence="12">
    <location>
        <begin position="485"/>
        <end position="487"/>
    </location>
</feature>
<feature type="helix" evidence="12">
    <location>
        <begin position="489"/>
        <end position="492"/>
    </location>
</feature>
<feature type="helix" evidence="12">
    <location>
        <begin position="501"/>
        <end position="504"/>
    </location>
</feature>
<feature type="helix" evidence="12">
    <location>
        <begin position="505"/>
        <end position="507"/>
    </location>
</feature>
<feature type="helix" evidence="12">
    <location>
        <begin position="510"/>
        <end position="517"/>
    </location>
</feature>
<feature type="turn" evidence="12">
    <location>
        <begin position="523"/>
        <end position="525"/>
    </location>
</feature>
<feature type="helix" evidence="12">
    <location>
        <begin position="526"/>
        <end position="532"/>
    </location>
</feature>
<feature type="helix" evidence="12">
    <location>
        <begin position="536"/>
        <end position="549"/>
    </location>
</feature>
<feature type="helix" evidence="12">
    <location>
        <begin position="551"/>
        <end position="555"/>
    </location>
</feature>
<feature type="helix" evidence="12">
    <location>
        <begin position="556"/>
        <end position="558"/>
    </location>
</feature>
<feature type="strand" evidence="13">
    <location>
        <begin position="559"/>
        <end position="561"/>
    </location>
</feature>
<feature type="helix" evidence="12">
    <location>
        <begin position="563"/>
        <end position="565"/>
    </location>
</feature>
<feature type="helix" evidence="12">
    <location>
        <begin position="566"/>
        <end position="574"/>
    </location>
</feature>
<feature type="helix" evidence="12">
    <location>
        <begin position="578"/>
        <end position="580"/>
    </location>
</feature>
<feature type="helix" evidence="12">
    <location>
        <begin position="587"/>
        <end position="594"/>
    </location>
</feature>
<feature type="helix" evidence="12">
    <location>
        <begin position="598"/>
        <end position="600"/>
    </location>
</feature>
<feature type="turn" evidence="12">
    <location>
        <begin position="601"/>
        <end position="605"/>
    </location>
</feature>
<feature type="helix" evidence="12">
    <location>
        <begin position="606"/>
        <end position="613"/>
    </location>
</feature>
<feature type="helix" evidence="12">
    <location>
        <begin position="617"/>
        <end position="631"/>
    </location>
</feature>
<feature type="turn" evidence="12">
    <location>
        <begin position="632"/>
        <end position="634"/>
    </location>
</feature>
<feature type="helix" evidence="12">
    <location>
        <begin position="638"/>
        <end position="649"/>
    </location>
</feature>
<feature type="helix" evidence="12">
    <location>
        <begin position="652"/>
        <end position="655"/>
    </location>
</feature>
<feature type="helix" evidence="12">
    <location>
        <begin position="656"/>
        <end position="662"/>
    </location>
</feature>
<feature type="helix" evidence="12">
    <location>
        <begin position="663"/>
        <end position="665"/>
    </location>
</feature>
<feature type="turn" evidence="14">
    <location>
        <begin position="666"/>
        <end position="668"/>
    </location>
</feature>
<feature type="helix" evidence="12">
    <location>
        <begin position="670"/>
        <end position="683"/>
    </location>
</feature>
<feature type="helix" evidence="12">
    <location>
        <begin position="699"/>
        <end position="703"/>
    </location>
</feature>
<feature type="strand" evidence="12">
    <location>
        <begin position="719"/>
        <end position="731"/>
    </location>
</feature>
<feature type="strand" evidence="12">
    <location>
        <begin position="733"/>
        <end position="736"/>
    </location>
</feature>
<feature type="strand" evidence="12">
    <location>
        <begin position="740"/>
        <end position="745"/>
    </location>
</feature>
<feature type="strand" evidence="12">
    <location>
        <begin position="748"/>
        <end position="751"/>
    </location>
</feature>
<feature type="strand" evidence="12">
    <location>
        <begin position="757"/>
        <end position="759"/>
    </location>
</feature>
<feature type="strand" evidence="12">
    <location>
        <begin position="766"/>
        <end position="771"/>
    </location>
</feature>
<feature type="helix" evidence="12">
    <location>
        <begin position="783"/>
        <end position="786"/>
    </location>
</feature>
<feature type="strand" evidence="12">
    <location>
        <begin position="788"/>
        <end position="793"/>
    </location>
</feature>
<feature type="turn" evidence="12">
    <location>
        <begin position="801"/>
        <end position="803"/>
    </location>
</feature>
<feature type="strand" evidence="12">
    <location>
        <begin position="806"/>
        <end position="819"/>
    </location>
</feature>
<feature type="strand" evidence="12">
    <location>
        <begin position="822"/>
        <end position="829"/>
    </location>
</feature>
<feature type="strand" evidence="12">
    <location>
        <begin position="834"/>
        <end position="836"/>
    </location>
</feature>
<feature type="strand" evidence="12">
    <location>
        <begin position="842"/>
        <end position="844"/>
    </location>
</feature>
<feature type="strand" evidence="12">
    <location>
        <begin position="847"/>
        <end position="854"/>
    </location>
</feature>
<feature type="helix" evidence="12">
    <location>
        <begin position="866"/>
        <end position="868"/>
    </location>
</feature>
<feature type="strand" evidence="15">
    <location>
        <begin position="887"/>
        <end position="889"/>
    </location>
</feature>
<feature type="helix" evidence="15">
    <location>
        <begin position="892"/>
        <end position="909"/>
    </location>
</feature>
<feature type="strand" evidence="15">
    <location>
        <begin position="913"/>
        <end position="915"/>
    </location>
</feature>
<feature type="strand" evidence="15">
    <location>
        <begin position="930"/>
        <end position="936"/>
    </location>
</feature>
<feature type="strand" evidence="15">
    <location>
        <begin position="939"/>
        <end position="949"/>
    </location>
</feature>
<feature type="strand" evidence="15">
    <location>
        <begin position="955"/>
        <end position="961"/>
    </location>
</feature>
<feature type="strand" evidence="15">
    <location>
        <begin position="967"/>
        <end position="990"/>
    </location>
</feature>
<feature type="strand" evidence="15">
    <location>
        <begin position="993"/>
        <end position="1006"/>
    </location>
</feature>
<feature type="strand" evidence="15">
    <location>
        <begin position="1019"/>
        <end position="1028"/>
    </location>
</feature>
<feature type="strand" evidence="15">
    <location>
        <begin position="1039"/>
        <end position="1052"/>
    </location>
</feature>
<feature type="strand" evidence="15">
    <location>
        <begin position="1056"/>
        <end position="1061"/>
    </location>
</feature>
<feature type="strand" evidence="15">
    <location>
        <begin position="1066"/>
        <end position="1075"/>
    </location>
</feature>
<feature type="strand" evidence="15">
    <location>
        <begin position="1078"/>
        <end position="1083"/>
    </location>
</feature>
<feature type="strand" evidence="15">
    <location>
        <begin position="1093"/>
        <end position="1100"/>
    </location>
</feature>
<feature type="strand" evidence="15">
    <location>
        <begin position="1109"/>
        <end position="1114"/>
    </location>
</feature>
<feature type="strand" evidence="15">
    <location>
        <begin position="1117"/>
        <end position="1123"/>
    </location>
</feature>
<feature type="strand" evidence="15">
    <location>
        <begin position="1131"/>
        <end position="1133"/>
    </location>
</feature>
<feature type="strand" evidence="15">
    <location>
        <begin position="1135"/>
        <end position="1139"/>
    </location>
</feature>
<feature type="strand" evidence="15">
    <location>
        <begin position="1142"/>
        <end position="1144"/>
    </location>
</feature>
<feature type="strand" evidence="15">
    <location>
        <begin position="1150"/>
        <end position="1154"/>
    </location>
</feature>
<feature type="strand" evidence="15">
    <location>
        <begin position="1157"/>
        <end position="1159"/>
    </location>
</feature>
<feature type="strand" evidence="15">
    <location>
        <begin position="1162"/>
        <end position="1169"/>
    </location>
</feature>
<feature type="helix" evidence="15">
    <location>
        <begin position="1174"/>
        <end position="1177"/>
    </location>
</feature>
<feature type="strand" evidence="15">
    <location>
        <begin position="1185"/>
        <end position="1187"/>
    </location>
</feature>
<feature type="strand" evidence="15">
    <location>
        <begin position="1194"/>
        <end position="1197"/>
    </location>
</feature>
<feature type="strand" evidence="15">
    <location>
        <begin position="1204"/>
        <end position="1213"/>
    </location>
</feature>
<feature type="strand" evidence="15">
    <location>
        <begin position="1215"/>
        <end position="1219"/>
    </location>
</feature>
<feature type="strand" evidence="15">
    <location>
        <begin position="1225"/>
        <end position="1234"/>
    </location>
</feature>
<feature type="strand" evidence="15">
    <location>
        <begin position="1242"/>
        <end position="1265"/>
    </location>
</feature>
<feature type="strand" evidence="15">
    <location>
        <begin position="1267"/>
        <end position="1271"/>
    </location>
</feature>
<feature type="strand" evidence="15">
    <location>
        <begin position="1277"/>
        <end position="1283"/>
    </location>
</feature>
<feature type="strand" evidence="15">
    <location>
        <begin position="1291"/>
        <end position="1295"/>
    </location>
</feature>
<feature type="strand" evidence="15">
    <location>
        <begin position="1298"/>
        <end position="1302"/>
    </location>
</feature>